<feature type="chain" id="PRO_0000233824" description="Bifunctional protein GlmU">
    <location>
        <begin position="1"/>
        <end position="455"/>
    </location>
</feature>
<feature type="region of interest" description="Pyrophosphorylase" evidence="1">
    <location>
        <begin position="1"/>
        <end position="226"/>
    </location>
</feature>
<feature type="region of interest" description="Linker" evidence="1">
    <location>
        <begin position="227"/>
        <end position="247"/>
    </location>
</feature>
<feature type="region of interest" description="N-acetyltransferase" evidence="1">
    <location>
        <begin position="248"/>
        <end position="455"/>
    </location>
</feature>
<feature type="active site" description="Proton acceptor" evidence="1">
    <location>
        <position position="360"/>
    </location>
</feature>
<feature type="binding site" evidence="1">
    <location>
        <begin position="8"/>
        <end position="11"/>
    </location>
    <ligand>
        <name>UDP-N-acetyl-alpha-D-glucosamine</name>
        <dbReference type="ChEBI" id="CHEBI:57705"/>
    </ligand>
</feature>
<feature type="binding site" evidence="1">
    <location>
        <position position="22"/>
    </location>
    <ligand>
        <name>UDP-N-acetyl-alpha-D-glucosamine</name>
        <dbReference type="ChEBI" id="CHEBI:57705"/>
    </ligand>
</feature>
<feature type="binding site" evidence="1">
    <location>
        <position position="73"/>
    </location>
    <ligand>
        <name>UDP-N-acetyl-alpha-D-glucosamine</name>
        <dbReference type="ChEBI" id="CHEBI:57705"/>
    </ligand>
</feature>
<feature type="binding site" evidence="1">
    <location>
        <begin position="78"/>
        <end position="79"/>
    </location>
    <ligand>
        <name>UDP-N-acetyl-alpha-D-glucosamine</name>
        <dbReference type="ChEBI" id="CHEBI:57705"/>
    </ligand>
</feature>
<feature type="binding site" evidence="1">
    <location>
        <begin position="99"/>
        <end position="101"/>
    </location>
    <ligand>
        <name>UDP-N-acetyl-alpha-D-glucosamine</name>
        <dbReference type="ChEBI" id="CHEBI:57705"/>
    </ligand>
</feature>
<feature type="binding site" evidence="1">
    <location>
        <position position="101"/>
    </location>
    <ligand>
        <name>Mg(2+)</name>
        <dbReference type="ChEBI" id="CHEBI:18420"/>
    </ligand>
</feature>
<feature type="binding site" evidence="1">
    <location>
        <position position="136"/>
    </location>
    <ligand>
        <name>UDP-N-acetyl-alpha-D-glucosamine</name>
        <dbReference type="ChEBI" id="CHEBI:57705"/>
    </ligand>
</feature>
<feature type="binding site" evidence="1">
    <location>
        <position position="151"/>
    </location>
    <ligand>
        <name>UDP-N-acetyl-alpha-D-glucosamine</name>
        <dbReference type="ChEBI" id="CHEBI:57705"/>
    </ligand>
</feature>
<feature type="binding site" evidence="1">
    <location>
        <position position="166"/>
    </location>
    <ligand>
        <name>UDP-N-acetyl-alpha-D-glucosamine</name>
        <dbReference type="ChEBI" id="CHEBI:57705"/>
    </ligand>
</feature>
<feature type="binding site" evidence="1">
    <location>
        <position position="224"/>
    </location>
    <ligand>
        <name>Mg(2+)</name>
        <dbReference type="ChEBI" id="CHEBI:18420"/>
    </ligand>
</feature>
<feature type="binding site" evidence="1">
    <location>
        <position position="224"/>
    </location>
    <ligand>
        <name>UDP-N-acetyl-alpha-D-glucosamine</name>
        <dbReference type="ChEBI" id="CHEBI:57705"/>
    </ligand>
</feature>
<feature type="binding site" evidence="1">
    <location>
        <position position="330"/>
    </location>
    <ligand>
        <name>UDP-N-acetyl-alpha-D-glucosamine</name>
        <dbReference type="ChEBI" id="CHEBI:57705"/>
    </ligand>
</feature>
<feature type="binding site" evidence="1">
    <location>
        <position position="348"/>
    </location>
    <ligand>
        <name>UDP-N-acetyl-alpha-D-glucosamine</name>
        <dbReference type="ChEBI" id="CHEBI:57705"/>
    </ligand>
</feature>
<feature type="binding site" evidence="1">
    <location>
        <position position="363"/>
    </location>
    <ligand>
        <name>UDP-N-acetyl-alpha-D-glucosamine</name>
        <dbReference type="ChEBI" id="CHEBI:57705"/>
    </ligand>
</feature>
<feature type="binding site" evidence="1">
    <location>
        <position position="374"/>
    </location>
    <ligand>
        <name>UDP-N-acetyl-alpha-D-glucosamine</name>
        <dbReference type="ChEBI" id="CHEBI:57705"/>
    </ligand>
</feature>
<feature type="binding site" evidence="1">
    <location>
        <position position="377"/>
    </location>
    <ligand>
        <name>acetyl-CoA</name>
        <dbReference type="ChEBI" id="CHEBI:57288"/>
    </ligand>
</feature>
<feature type="binding site" evidence="1">
    <location>
        <begin position="383"/>
        <end position="384"/>
    </location>
    <ligand>
        <name>acetyl-CoA</name>
        <dbReference type="ChEBI" id="CHEBI:57288"/>
    </ligand>
</feature>
<feature type="binding site" evidence="1">
    <location>
        <position position="402"/>
    </location>
    <ligand>
        <name>acetyl-CoA</name>
        <dbReference type="ChEBI" id="CHEBI:57288"/>
    </ligand>
</feature>
<feature type="binding site" evidence="1">
    <location>
        <position position="420"/>
    </location>
    <ligand>
        <name>acetyl-CoA</name>
        <dbReference type="ChEBI" id="CHEBI:57288"/>
    </ligand>
</feature>
<feature type="binding site" evidence="1">
    <location>
        <position position="437"/>
    </location>
    <ligand>
        <name>acetyl-CoA</name>
        <dbReference type="ChEBI" id="CHEBI:57288"/>
    </ligand>
</feature>
<protein>
    <recommendedName>
        <fullName evidence="1">Bifunctional protein GlmU</fullName>
    </recommendedName>
    <domain>
        <recommendedName>
            <fullName evidence="1">UDP-N-acetylglucosamine pyrophosphorylase</fullName>
            <ecNumber evidence="1">2.7.7.23</ecNumber>
        </recommendedName>
        <alternativeName>
            <fullName evidence="1">N-acetylglucosamine-1-phosphate uridyltransferase</fullName>
        </alternativeName>
    </domain>
    <domain>
        <recommendedName>
            <fullName evidence="1">Glucosamine-1-phosphate N-acetyltransferase</fullName>
            <ecNumber evidence="1">2.3.1.157</ecNumber>
        </recommendedName>
    </domain>
</protein>
<evidence type="ECO:0000255" key="1">
    <source>
        <dbReference type="HAMAP-Rule" id="MF_01631"/>
    </source>
</evidence>
<reference key="1">
    <citation type="journal article" date="2002" name="Environ. Microbiol.">
        <title>Complete genome sequence and comparative analysis of the metabolically versatile Pseudomonas putida KT2440.</title>
        <authorList>
            <person name="Nelson K.E."/>
            <person name="Weinel C."/>
            <person name="Paulsen I.T."/>
            <person name="Dodson R.J."/>
            <person name="Hilbert H."/>
            <person name="Martins dos Santos V.A.P."/>
            <person name="Fouts D.E."/>
            <person name="Gill S.R."/>
            <person name="Pop M."/>
            <person name="Holmes M."/>
            <person name="Brinkac L.M."/>
            <person name="Beanan M.J."/>
            <person name="DeBoy R.T."/>
            <person name="Daugherty S.C."/>
            <person name="Kolonay J.F."/>
            <person name="Madupu R."/>
            <person name="Nelson W.C."/>
            <person name="White O."/>
            <person name="Peterson J.D."/>
            <person name="Khouri H.M."/>
            <person name="Hance I."/>
            <person name="Chris Lee P."/>
            <person name="Holtzapple E.K."/>
            <person name="Scanlan D."/>
            <person name="Tran K."/>
            <person name="Moazzez A."/>
            <person name="Utterback T.R."/>
            <person name="Rizzo M."/>
            <person name="Lee K."/>
            <person name="Kosack D."/>
            <person name="Moestl D."/>
            <person name="Wedler H."/>
            <person name="Lauber J."/>
            <person name="Stjepandic D."/>
            <person name="Hoheisel J."/>
            <person name="Straetz M."/>
            <person name="Heim S."/>
            <person name="Kiewitz C."/>
            <person name="Eisen J.A."/>
            <person name="Timmis K.N."/>
            <person name="Duesterhoeft A."/>
            <person name="Tuemmler B."/>
            <person name="Fraser C.M."/>
        </authorList>
    </citation>
    <scope>NUCLEOTIDE SEQUENCE [LARGE SCALE GENOMIC DNA]</scope>
    <source>
        <strain>ATCC 47054 / DSM 6125 / CFBP 8728 / NCIMB 11950 / KT2440</strain>
    </source>
</reference>
<gene>
    <name evidence="1" type="primary">glmU</name>
    <name type="ordered locus">PP_5411</name>
</gene>
<comment type="function">
    <text evidence="1">Catalyzes the last two sequential reactions in the de novo biosynthetic pathway for UDP-N-acetylglucosamine (UDP-GlcNAc). The C-terminal domain catalyzes the transfer of acetyl group from acetyl coenzyme A to glucosamine-1-phosphate (GlcN-1-P) to produce N-acetylglucosamine-1-phosphate (GlcNAc-1-P), which is converted into UDP-GlcNAc by the transfer of uridine 5-monophosphate (from uridine 5-triphosphate), a reaction catalyzed by the N-terminal domain.</text>
</comment>
<comment type="catalytic activity">
    <reaction evidence="1">
        <text>alpha-D-glucosamine 1-phosphate + acetyl-CoA = N-acetyl-alpha-D-glucosamine 1-phosphate + CoA + H(+)</text>
        <dbReference type="Rhea" id="RHEA:13725"/>
        <dbReference type="ChEBI" id="CHEBI:15378"/>
        <dbReference type="ChEBI" id="CHEBI:57287"/>
        <dbReference type="ChEBI" id="CHEBI:57288"/>
        <dbReference type="ChEBI" id="CHEBI:57776"/>
        <dbReference type="ChEBI" id="CHEBI:58516"/>
        <dbReference type="EC" id="2.3.1.157"/>
    </reaction>
</comment>
<comment type="catalytic activity">
    <reaction evidence="1">
        <text>N-acetyl-alpha-D-glucosamine 1-phosphate + UTP + H(+) = UDP-N-acetyl-alpha-D-glucosamine + diphosphate</text>
        <dbReference type="Rhea" id="RHEA:13509"/>
        <dbReference type="ChEBI" id="CHEBI:15378"/>
        <dbReference type="ChEBI" id="CHEBI:33019"/>
        <dbReference type="ChEBI" id="CHEBI:46398"/>
        <dbReference type="ChEBI" id="CHEBI:57705"/>
        <dbReference type="ChEBI" id="CHEBI:57776"/>
        <dbReference type="EC" id="2.7.7.23"/>
    </reaction>
</comment>
<comment type="cofactor">
    <cofactor evidence="1">
        <name>Mg(2+)</name>
        <dbReference type="ChEBI" id="CHEBI:18420"/>
    </cofactor>
    <text evidence="1">Binds 1 Mg(2+) ion per subunit.</text>
</comment>
<comment type="pathway">
    <text evidence="1">Nucleotide-sugar biosynthesis; UDP-N-acetyl-alpha-D-glucosamine biosynthesis; N-acetyl-alpha-D-glucosamine 1-phosphate from alpha-D-glucosamine 6-phosphate (route II): step 2/2.</text>
</comment>
<comment type="pathway">
    <text evidence="1">Nucleotide-sugar biosynthesis; UDP-N-acetyl-alpha-D-glucosamine biosynthesis; UDP-N-acetyl-alpha-D-glucosamine from N-acetyl-alpha-D-glucosamine 1-phosphate: step 1/1.</text>
</comment>
<comment type="pathway">
    <text evidence="1">Bacterial outer membrane biogenesis; LPS lipid A biosynthesis.</text>
</comment>
<comment type="subunit">
    <text evidence="1">Homotrimer.</text>
</comment>
<comment type="subcellular location">
    <subcellularLocation>
        <location evidence="1">Cytoplasm</location>
    </subcellularLocation>
</comment>
<comment type="similarity">
    <text evidence="1">In the N-terminal section; belongs to the N-acetylglucosamine-1-phosphate uridyltransferase family.</text>
</comment>
<comment type="similarity">
    <text evidence="1">In the C-terminal section; belongs to the transferase hexapeptide repeat family.</text>
</comment>
<proteinExistence type="inferred from homology"/>
<dbReference type="EC" id="2.7.7.23" evidence="1"/>
<dbReference type="EC" id="2.3.1.157" evidence="1"/>
<dbReference type="EMBL" id="AE015451">
    <property type="protein sequence ID" value="AAN70975.1"/>
    <property type="molecule type" value="Genomic_DNA"/>
</dbReference>
<dbReference type="RefSeq" id="NP_747511.1">
    <property type="nucleotide sequence ID" value="NC_002947.4"/>
</dbReference>
<dbReference type="RefSeq" id="WP_010955885.1">
    <property type="nucleotide sequence ID" value="NZ_CP169744.1"/>
</dbReference>
<dbReference type="SMR" id="Q88BX6"/>
<dbReference type="STRING" id="160488.PP_5411"/>
<dbReference type="PaxDb" id="160488-PP_5411"/>
<dbReference type="GeneID" id="83683224"/>
<dbReference type="KEGG" id="ppu:PP_5411"/>
<dbReference type="PATRIC" id="fig|160488.4.peg.5778"/>
<dbReference type="eggNOG" id="COG1207">
    <property type="taxonomic scope" value="Bacteria"/>
</dbReference>
<dbReference type="HOGENOM" id="CLU_029499_15_2_6"/>
<dbReference type="OrthoDB" id="9775031at2"/>
<dbReference type="PhylomeDB" id="Q88BX6"/>
<dbReference type="BioCyc" id="PPUT160488:G1G01-5777-MONOMER"/>
<dbReference type="UniPathway" id="UPA00113">
    <property type="reaction ID" value="UER00532"/>
</dbReference>
<dbReference type="UniPathway" id="UPA00113">
    <property type="reaction ID" value="UER00533"/>
</dbReference>
<dbReference type="UniPathway" id="UPA00973"/>
<dbReference type="Proteomes" id="UP000000556">
    <property type="component" value="Chromosome"/>
</dbReference>
<dbReference type="GO" id="GO:0005737">
    <property type="term" value="C:cytoplasm"/>
    <property type="evidence" value="ECO:0007669"/>
    <property type="project" value="UniProtKB-SubCell"/>
</dbReference>
<dbReference type="GO" id="GO:0016020">
    <property type="term" value="C:membrane"/>
    <property type="evidence" value="ECO:0007669"/>
    <property type="project" value="GOC"/>
</dbReference>
<dbReference type="GO" id="GO:0019134">
    <property type="term" value="F:glucosamine-1-phosphate N-acetyltransferase activity"/>
    <property type="evidence" value="ECO:0007669"/>
    <property type="project" value="UniProtKB-UniRule"/>
</dbReference>
<dbReference type="GO" id="GO:0000287">
    <property type="term" value="F:magnesium ion binding"/>
    <property type="evidence" value="ECO:0007669"/>
    <property type="project" value="UniProtKB-UniRule"/>
</dbReference>
<dbReference type="GO" id="GO:0003977">
    <property type="term" value="F:UDP-N-acetylglucosamine diphosphorylase activity"/>
    <property type="evidence" value="ECO:0007669"/>
    <property type="project" value="UniProtKB-UniRule"/>
</dbReference>
<dbReference type="GO" id="GO:0000902">
    <property type="term" value="P:cell morphogenesis"/>
    <property type="evidence" value="ECO:0007669"/>
    <property type="project" value="UniProtKB-UniRule"/>
</dbReference>
<dbReference type="GO" id="GO:0071555">
    <property type="term" value="P:cell wall organization"/>
    <property type="evidence" value="ECO:0007669"/>
    <property type="project" value="UniProtKB-KW"/>
</dbReference>
<dbReference type="GO" id="GO:0009245">
    <property type="term" value="P:lipid A biosynthetic process"/>
    <property type="evidence" value="ECO:0007669"/>
    <property type="project" value="UniProtKB-UniRule"/>
</dbReference>
<dbReference type="GO" id="GO:0009252">
    <property type="term" value="P:peptidoglycan biosynthetic process"/>
    <property type="evidence" value="ECO:0007669"/>
    <property type="project" value="UniProtKB-UniRule"/>
</dbReference>
<dbReference type="GO" id="GO:0008360">
    <property type="term" value="P:regulation of cell shape"/>
    <property type="evidence" value="ECO:0007669"/>
    <property type="project" value="UniProtKB-KW"/>
</dbReference>
<dbReference type="GO" id="GO:0006048">
    <property type="term" value="P:UDP-N-acetylglucosamine biosynthetic process"/>
    <property type="evidence" value="ECO:0007669"/>
    <property type="project" value="UniProtKB-UniPathway"/>
</dbReference>
<dbReference type="CDD" id="cd02540">
    <property type="entry name" value="GT2_GlmU_N_bac"/>
    <property type="match status" value="1"/>
</dbReference>
<dbReference type="CDD" id="cd03353">
    <property type="entry name" value="LbH_GlmU_C"/>
    <property type="match status" value="1"/>
</dbReference>
<dbReference type="Gene3D" id="2.160.10.10">
    <property type="entry name" value="Hexapeptide repeat proteins"/>
    <property type="match status" value="1"/>
</dbReference>
<dbReference type="Gene3D" id="3.90.550.10">
    <property type="entry name" value="Spore Coat Polysaccharide Biosynthesis Protein SpsA, Chain A"/>
    <property type="match status" value="1"/>
</dbReference>
<dbReference type="HAMAP" id="MF_01631">
    <property type="entry name" value="GlmU"/>
    <property type="match status" value="1"/>
</dbReference>
<dbReference type="InterPro" id="IPR005882">
    <property type="entry name" value="Bifunctional_GlmU"/>
</dbReference>
<dbReference type="InterPro" id="IPR050065">
    <property type="entry name" value="GlmU-like"/>
</dbReference>
<dbReference type="InterPro" id="IPR038009">
    <property type="entry name" value="GlmU_C_LbH"/>
</dbReference>
<dbReference type="InterPro" id="IPR001451">
    <property type="entry name" value="Hexapep"/>
</dbReference>
<dbReference type="InterPro" id="IPR025877">
    <property type="entry name" value="MobA-like_NTP_Trfase"/>
</dbReference>
<dbReference type="InterPro" id="IPR029044">
    <property type="entry name" value="Nucleotide-diphossugar_trans"/>
</dbReference>
<dbReference type="InterPro" id="IPR011004">
    <property type="entry name" value="Trimer_LpxA-like_sf"/>
</dbReference>
<dbReference type="NCBIfam" id="TIGR01173">
    <property type="entry name" value="glmU"/>
    <property type="match status" value="1"/>
</dbReference>
<dbReference type="PANTHER" id="PTHR43584:SF3">
    <property type="entry name" value="BIFUNCTIONAL PROTEIN GLMU"/>
    <property type="match status" value="1"/>
</dbReference>
<dbReference type="PANTHER" id="PTHR43584">
    <property type="entry name" value="NUCLEOTIDYL TRANSFERASE"/>
    <property type="match status" value="1"/>
</dbReference>
<dbReference type="Pfam" id="PF00132">
    <property type="entry name" value="Hexapep"/>
    <property type="match status" value="1"/>
</dbReference>
<dbReference type="Pfam" id="PF14602">
    <property type="entry name" value="Hexapep_2"/>
    <property type="match status" value="1"/>
</dbReference>
<dbReference type="Pfam" id="PF12804">
    <property type="entry name" value="NTP_transf_3"/>
    <property type="match status" value="1"/>
</dbReference>
<dbReference type="SUPFAM" id="SSF53448">
    <property type="entry name" value="Nucleotide-diphospho-sugar transferases"/>
    <property type="match status" value="1"/>
</dbReference>
<dbReference type="SUPFAM" id="SSF51161">
    <property type="entry name" value="Trimeric LpxA-like enzymes"/>
    <property type="match status" value="1"/>
</dbReference>
<accession>Q88BX6</accession>
<keyword id="KW-0012">Acyltransferase</keyword>
<keyword id="KW-0133">Cell shape</keyword>
<keyword id="KW-0961">Cell wall biogenesis/degradation</keyword>
<keyword id="KW-0963">Cytoplasm</keyword>
<keyword id="KW-0460">Magnesium</keyword>
<keyword id="KW-0479">Metal-binding</keyword>
<keyword id="KW-0511">Multifunctional enzyme</keyword>
<keyword id="KW-0548">Nucleotidyltransferase</keyword>
<keyword id="KW-0573">Peptidoglycan synthesis</keyword>
<keyword id="KW-1185">Reference proteome</keyword>
<keyword id="KW-0677">Repeat</keyword>
<keyword id="KW-0808">Transferase</keyword>
<sequence>MSLDIVILAAGQGTRMRSALPKVLHPVAGNSMLGHVIHSARQLQPQGIHVVIGHGAELVRERLAADDLNFVMQDKQLGTGHAVAQALPALTADTVLVLYGDVPLIEVETLQRLLAKANDQQLGLLTVTLDDPTGYGRIVRDEQGKVTAIVEHKDANDAQKAIKEGNTGILALPAARLADWMGRLSNNNAQGEYYLTDVIAMAVADGLVVATEQPHDAMEVQGANDRRQLSELERHYQLREGRRLMAQGVTLRDPARFDVRGEVSVGRDVLIDINVILEGKVVIEDDVQIGPNCVIKNTTLRKGAVVKANSHLEGAVMGEGSDAGPFARLRPGSVLDAKAHVGNFVELKNAHLGEGAKAGHLTYLGDAEIGARTNIGAGTITCNYDGANKFKTVMGEDVFIGSNNSLVAPVEIKAGATTAAGSTITQAVEAGDLAVARARQRNISGWKRPEKIKKS</sequence>
<name>GLMU_PSEPK</name>
<organism>
    <name type="scientific">Pseudomonas putida (strain ATCC 47054 / DSM 6125 / CFBP 8728 / NCIMB 11950 / KT2440)</name>
    <dbReference type="NCBI Taxonomy" id="160488"/>
    <lineage>
        <taxon>Bacteria</taxon>
        <taxon>Pseudomonadati</taxon>
        <taxon>Pseudomonadota</taxon>
        <taxon>Gammaproteobacteria</taxon>
        <taxon>Pseudomonadales</taxon>
        <taxon>Pseudomonadaceae</taxon>
        <taxon>Pseudomonas</taxon>
    </lineage>
</organism>